<name>XRE_PHOLL</name>
<comment type="function">
    <text evidence="2">Antitoxin component of a type II toxin-antitoxin (TA) system. Neutralizes the NAD(+) depleting activity of cognate toxin Res.</text>
</comment>
<comment type="subunit">
    <text evidence="1">Homodimer. Forms a complex with cognate toxin Rse.</text>
</comment>
<comment type="similarity">
    <text evidence="4">Belongs to the MbcA/ParS/Xre antitoxin family.</text>
</comment>
<protein>
    <recommendedName>
        <fullName evidence="5">Antitoxin Xre</fullName>
    </recommendedName>
</protein>
<feature type="chain" id="PRO_0000448601" description="Antitoxin Xre">
    <location>
        <begin position="1"/>
        <end position="148"/>
    </location>
</feature>
<proteinExistence type="evidence at protein level"/>
<organism>
    <name type="scientific">Photorhabdus laumondii subsp. laumondii (strain DSM 15139 / CIP 105565 / TT01)</name>
    <name type="common">Photorhabdus luminescens subsp. laumondii</name>
    <dbReference type="NCBI Taxonomy" id="243265"/>
    <lineage>
        <taxon>Bacteria</taxon>
        <taxon>Pseudomonadati</taxon>
        <taxon>Pseudomonadota</taxon>
        <taxon>Gammaproteobacteria</taxon>
        <taxon>Enterobacterales</taxon>
        <taxon>Morganellaceae</taxon>
        <taxon>Photorhabdus</taxon>
    </lineage>
</organism>
<sequence length="148" mass="16467">MRVFTPSHKVQSNPLWRTVGFPSSSGPHLNAILNEGLPVTIVDKIQNWSTFGKGDILRIAGIQIRSYSRRCSGKGKFTADESQRIARFVRVMDHAVDLFNGDKDKAAQWMKRPIRGLGYVTPESMLDTESGALDVMNLIGRIEHGIVS</sequence>
<gene>
    <name evidence="3" type="primary">xre</name>
    <name type="ordered locus">plu2357</name>
</gene>
<evidence type="ECO:0000250" key="1">
    <source>
        <dbReference type="UniProtKB" id="Q88K58"/>
    </source>
</evidence>
<evidence type="ECO:0000269" key="2">
    <source>
    </source>
</evidence>
<evidence type="ECO:0000303" key="3">
    <source>
    </source>
</evidence>
<evidence type="ECO:0000305" key="4"/>
<evidence type="ECO:0000305" key="5">
    <source>
    </source>
</evidence>
<keyword id="KW-1185">Reference proteome</keyword>
<keyword id="KW-1277">Toxin-antitoxin system</keyword>
<reference key="1">
    <citation type="journal article" date="2003" name="Nat. Biotechnol.">
        <title>The genome sequence of the entomopathogenic bacterium Photorhabdus luminescens.</title>
        <authorList>
            <person name="Duchaud E."/>
            <person name="Rusniok C."/>
            <person name="Frangeul L."/>
            <person name="Buchrieser C."/>
            <person name="Givaudan A."/>
            <person name="Taourit S."/>
            <person name="Bocs S."/>
            <person name="Boursaux-Eude C."/>
            <person name="Chandler M."/>
            <person name="Charles J.-F."/>
            <person name="Dassa E."/>
            <person name="Derose R."/>
            <person name="Derzelle S."/>
            <person name="Freyssinet G."/>
            <person name="Gaudriault S."/>
            <person name="Medigue C."/>
            <person name="Lanois A."/>
            <person name="Powell K."/>
            <person name="Siguier P."/>
            <person name="Vincent R."/>
            <person name="Wingate V."/>
            <person name="Zouine M."/>
            <person name="Glaser P."/>
            <person name="Boemare N."/>
            <person name="Danchin A."/>
            <person name="Kunst F."/>
        </authorList>
    </citation>
    <scope>NUCLEOTIDE SEQUENCE [LARGE SCALE GENOMIC DNA]</scope>
    <source>
        <strain>DSM 15139 / CIP 105565 / TT01</strain>
    </source>
</reference>
<reference key="2">
    <citation type="journal article" date="2019" name="Mol. Microbiol.">
        <title>The RES domain toxins of RES-Xre toxin-antitoxin modules induce cell stasis by degrading NAD+.</title>
        <authorList>
            <person name="Skjerning R.B."/>
            <person name="Senissar M."/>
            <person name="Winther K.S."/>
            <person name="Gerdes K."/>
            <person name="Brodersen D.E."/>
        </authorList>
    </citation>
    <scope>FUNCTION AS AN ANTITOXIN</scope>
    <scope>EXPRESSION IN E.COLI</scope>
    <source>
        <strain>DSM 15139 / CIP 105565 / TT01</strain>
    </source>
</reference>
<dbReference type="EMBL" id="BX571866">
    <property type="protein sequence ID" value="CAE14650.1"/>
    <property type="molecule type" value="Genomic_DNA"/>
</dbReference>
<dbReference type="RefSeq" id="WP_011146593.1">
    <property type="nucleotide sequence ID" value="NC_005126.1"/>
</dbReference>
<dbReference type="SMR" id="Q7N4I0"/>
<dbReference type="STRING" id="243265.plu2357"/>
<dbReference type="GeneID" id="48848629"/>
<dbReference type="KEGG" id="plu:plu2357"/>
<dbReference type="eggNOG" id="COG5642">
    <property type="taxonomic scope" value="Bacteria"/>
</dbReference>
<dbReference type="HOGENOM" id="CLU_109353_3_0_6"/>
<dbReference type="OrthoDB" id="8595277at2"/>
<dbReference type="Proteomes" id="UP000002514">
    <property type="component" value="Chromosome"/>
</dbReference>
<dbReference type="GO" id="GO:0003677">
    <property type="term" value="F:DNA binding"/>
    <property type="evidence" value="ECO:0007669"/>
    <property type="project" value="InterPro"/>
</dbReference>
<dbReference type="InterPro" id="IPR011979">
    <property type="entry name" value="Antitox_Xre"/>
</dbReference>
<dbReference type="InterPro" id="IPR046847">
    <property type="entry name" value="Xre-like_HTH"/>
</dbReference>
<dbReference type="InterPro" id="IPR024467">
    <property type="entry name" value="Xre/MbcA/ParS-like_toxin-bd"/>
</dbReference>
<dbReference type="NCBIfam" id="TIGR02293">
    <property type="entry name" value="TAS_TIGR02293"/>
    <property type="match status" value="1"/>
</dbReference>
<dbReference type="Pfam" id="PF20432">
    <property type="entry name" value="Xre-like-HTH"/>
    <property type="match status" value="1"/>
</dbReference>
<dbReference type="Pfam" id="PF09722">
    <property type="entry name" value="Xre_MbcA_ParS_C"/>
    <property type="match status" value="1"/>
</dbReference>
<accession>Q7N4I0</accession>